<dbReference type="EMBL" id="CP000821">
    <property type="protein sequence ID" value="ABV38065.1"/>
    <property type="molecule type" value="Genomic_DNA"/>
</dbReference>
<dbReference type="RefSeq" id="WP_012143795.1">
    <property type="nucleotide sequence ID" value="NC_009831.1"/>
</dbReference>
<dbReference type="SMR" id="A8FYZ2"/>
<dbReference type="STRING" id="425104.Ssed_3461"/>
<dbReference type="KEGG" id="sse:Ssed_3461"/>
<dbReference type="eggNOG" id="COG3017">
    <property type="taxonomic scope" value="Bacteria"/>
</dbReference>
<dbReference type="HOGENOM" id="CLU_092816_1_0_6"/>
<dbReference type="OrthoDB" id="9797618at2"/>
<dbReference type="Proteomes" id="UP000002015">
    <property type="component" value="Chromosome"/>
</dbReference>
<dbReference type="GO" id="GO:0009279">
    <property type="term" value="C:cell outer membrane"/>
    <property type="evidence" value="ECO:0007669"/>
    <property type="project" value="UniProtKB-SubCell"/>
</dbReference>
<dbReference type="GO" id="GO:0044874">
    <property type="term" value="P:lipoprotein localization to outer membrane"/>
    <property type="evidence" value="ECO:0007669"/>
    <property type="project" value="UniProtKB-UniRule"/>
</dbReference>
<dbReference type="GO" id="GO:0015031">
    <property type="term" value="P:protein transport"/>
    <property type="evidence" value="ECO:0007669"/>
    <property type="project" value="UniProtKB-KW"/>
</dbReference>
<dbReference type="CDD" id="cd16326">
    <property type="entry name" value="LolB"/>
    <property type="match status" value="1"/>
</dbReference>
<dbReference type="Gene3D" id="2.50.20.10">
    <property type="entry name" value="Lipoprotein localisation LolA/LolB/LppX"/>
    <property type="match status" value="1"/>
</dbReference>
<dbReference type="HAMAP" id="MF_00233">
    <property type="entry name" value="LolB"/>
    <property type="match status" value="1"/>
</dbReference>
<dbReference type="InterPro" id="IPR029046">
    <property type="entry name" value="LolA/LolB/LppX"/>
</dbReference>
<dbReference type="InterPro" id="IPR004565">
    <property type="entry name" value="OM_lipoprot_LolB"/>
</dbReference>
<dbReference type="NCBIfam" id="TIGR00548">
    <property type="entry name" value="lolB"/>
    <property type="match status" value="1"/>
</dbReference>
<dbReference type="Pfam" id="PF03550">
    <property type="entry name" value="LolB"/>
    <property type="match status" value="1"/>
</dbReference>
<dbReference type="SUPFAM" id="SSF89392">
    <property type="entry name" value="Prokaryotic lipoproteins and lipoprotein localization factors"/>
    <property type="match status" value="1"/>
</dbReference>
<name>LOLB_SHESH</name>
<reference key="1">
    <citation type="submission" date="2007-08" db="EMBL/GenBank/DDBJ databases">
        <title>Complete sequence of Shewanella sediminis HAW-EB3.</title>
        <authorList>
            <consortium name="US DOE Joint Genome Institute"/>
            <person name="Copeland A."/>
            <person name="Lucas S."/>
            <person name="Lapidus A."/>
            <person name="Barry K."/>
            <person name="Glavina del Rio T."/>
            <person name="Dalin E."/>
            <person name="Tice H."/>
            <person name="Pitluck S."/>
            <person name="Chertkov O."/>
            <person name="Brettin T."/>
            <person name="Bruce D."/>
            <person name="Detter J.C."/>
            <person name="Han C."/>
            <person name="Schmutz J."/>
            <person name="Larimer F."/>
            <person name="Land M."/>
            <person name="Hauser L."/>
            <person name="Kyrpides N."/>
            <person name="Kim E."/>
            <person name="Zhao J.-S."/>
            <person name="Richardson P."/>
        </authorList>
    </citation>
    <scope>NUCLEOTIDE SEQUENCE [LARGE SCALE GENOMIC DNA]</scope>
    <source>
        <strain>HAW-EB3</strain>
    </source>
</reference>
<gene>
    <name evidence="1" type="primary">lolB</name>
    <name type="ordered locus">Ssed_3461</name>
</gene>
<accession>A8FYZ2</accession>
<sequence>MNNLSYLTKIPLIWVLLSVTLLSACSVAPPENFIPVQVDDVSNAQAWEMQGKLAVRTSKDKFSTNLYWFHTDKKNELTLTTMLGTTVLSLTTLEGEARLEVDGKVYQDKDAQRLLTRVTGWSIPVDALPLWITGRLSDDDELLVQDEQQRPMKLATQNPPPWEVEFISWQQQSGAELPRLLQLKREDLRLKIQISHWQALSAAHLLPSNQPEERLNEQ</sequence>
<organism>
    <name type="scientific">Shewanella sediminis (strain HAW-EB3)</name>
    <dbReference type="NCBI Taxonomy" id="425104"/>
    <lineage>
        <taxon>Bacteria</taxon>
        <taxon>Pseudomonadati</taxon>
        <taxon>Pseudomonadota</taxon>
        <taxon>Gammaproteobacteria</taxon>
        <taxon>Alteromonadales</taxon>
        <taxon>Shewanellaceae</taxon>
        <taxon>Shewanella</taxon>
    </lineage>
</organism>
<evidence type="ECO:0000255" key="1">
    <source>
        <dbReference type="HAMAP-Rule" id="MF_00233"/>
    </source>
</evidence>
<keyword id="KW-0998">Cell outer membrane</keyword>
<keyword id="KW-0143">Chaperone</keyword>
<keyword id="KW-0449">Lipoprotein</keyword>
<keyword id="KW-0472">Membrane</keyword>
<keyword id="KW-0564">Palmitate</keyword>
<keyword id="KW-0653">Protein transport</keyword>
<keyword id="KW-1185">Reference proteome</keyword>
<keyword id="KW-0732">Signal</keyword>
<keyword id="KW-0813">Transport</keyword>
<comment type="function">
    <text evidence="1">Plays a critical role in the incorporation of lipoproteins in the outer membrane after they are released by the LolA protein.</text>
</comment>
<comment type="subunit">
    <text evidence="1">Monomer.</text>
</comment>
<comment type="subcellular location">
    <subcellularLocation>
        <location evidence="1">Cell outer membrane</location>
        <topology evidence="1">Lipid-anchor</topology>
    </subcellularLocation>
</comment>
<comment type="similarity">
    <text evidence="1">Belongs to the LolB family.</text>
</comment>
<proteinExistence type="inferred from homology"/>
<protein>
    <recommendedName>
        <fullName evidence="1">Outer-membrane lipoprotein LolB</fullName>
    </recommendedName>
</protein>
<feature type="signal peptide" evidence="1">
    <location>
        <begin position="1"/>
        <end position="24"/>
    </location>
</feature>
<feature type="chain" id="PRO_1000078261" description="Outer-membrane lipoprotein LolB">
    <location>
        <begin position="25"/>
        <end position="218"/>
    </location>
</feature>
<feature type="lipid moiety-binding region" description="N-palmitoyl cysteine" evidence="1">
    <location>
        <position position="25"/>
    </location>
</feature>
<feature type="lipid moiety-binding region" description="S-diacylglycerol cysteine" evidence="1">
    <location>
        <position position="25"/>
    </location>
</feature>